<gene>
    <name evidence="1" type="primary">hprK</name>
    <name type="ordered locus">CLH_2574</name>
</gene>
<sequence>MAVSVKRLINDFDLEVLVEGNEDVKIEVNDVNRPGLQLAGFYNYFAPERIQIIGKAEWSFLQDMQIEVRKKRVKKYLSFNITCLIISRGLDPHEEFIKEARKNNIWVLRSKSVTTKLISKITLYLADKLAPETRLHGVLVDVSGIGILITGESGIGKSETALELIKRGHRLITDDAVDIRESDGTLIGSSPKITIGMLEVRGIGIIDVTQLYGLSSVLEEKEIKLIMHFEHWKDDNDYDRLGIDNQYMDILGIPVKKLTVPVRPGRNIAVIIEAAAVNYRYSLMSKISPVDIIENRMSAVSDEA</sequence>
<name>HPRK_CLOBA</name>
<keyword id="KW-0067">ATP-binding</keyword>
<keyword id="KW-0119">Carbohydrate metabolism</keyword>
<keyword id="KW-0418">Kinase</keyword>
<keyword id="KW-0460">Magnesium</keyword>
<keyword id="KW-0479">Metal-binding</keyword>
<keyword id="KW-0511">Multifunctional enzyme</keyword>
<keyword id="KW-0547">Nucleotide-binding</keyword>
<keyword id="KW-0723">Serine/threonine-protein kinase</keyword>
<keyword id="KW-0808">Transferase</keyword>
<protein>
    <recommendedName>
        <fullName evidence="1">HPr kinase/phosphorylase</fullName>
        <shortName evidence="1">HPrK/P</shortName>
        <ecNumber evidence="1">2.7.11.-</ecNumber>
        <ecNumber evidence="1">2.7.4.-</ecNumber>
    </recommendedName>
    <alternativeName>
        <fullName evidence="1">HPr(Ser) kinase/phosphorylase</fullName>
    </alternativeName>
</protein>
<dbReference type="EC" id="2.7.11.-" evidence="1"/>
<dbReference type="EC" id="2.7.4.-" evidence="1"/>
<dbReference type="EMBL" id="CP001078">
    <property type="protein sequence ID" value="ACD53080.1"/>
    <property type="molecule type" value="Genomic_DNA"/>
</dbReference>
<dbReference type="RefSeq" id="WP_012451064.1">
    <property type="nucleotide sequence ID" value="NC_010723.1"/>
</dbReference>
<dbReference type="SMR" id="B2UWW9"/>
<dbReference type="KEGG" id="cbt:CLH_2574"/>
<dbReference type="HOGENOM" id="CLU_052030_0_1_9"/>
<dbReference type="GO" id="GO:0005524">
    <property type="term" value="F:ATP binding"/>
    <property type="evidence" value="ECO:0007669"/>
    <property type="project" value="UniProtKB-UniRule"/>
</dbReference>
<dbReference type="GO" id="GO:0000287">
    <property type="term" value="F:magnesium ion binding"/>
    <property type="evidence" value="ECO:0007669"/>
    <property type="project" value="UniProtKB-UniRule"/>
</dbReference>
<dbReference type="GO" id="GO:0000155">
    <property type="term" value="F:phosphorelay sensor kinase activity"/>
    <property type="evidence" value="ECO:0007669"/>
    <property type="project" value="InterPro"/>
</dbReference>
<dbReference type="GO" id="GO:0004674">
    <property type="term" value="F:protein serine/threonine kinase activity"/>
    <property type="evidence" value="ECO:0007669"/>
    <property type="project" value="UniProtKB-KW"/>
</dbReference>
<dbReference type="GO" id="GO:0004712">
    <property type="term" value="F:protein serine/threonine/tyrosine kinase activity"/>
    <property type="evidence" value="ECO:0007669"/>
    <property type="project" value="UniProtKB-UniRule"/>
</dbReference>
<dbReference type="GO" id="GO:0006109">
    <property type="term" value="P:regulation of carbohydrate metabolic process"/>
    <property type="evidence" value="ECO:0007669"/>
    <property type="project" value="UniProtKB-UniRule"/>
</dbReference>
<dbReference type="CDD" id="cd01918">
    <property type="entry name" value="HprK_C"/>
    <property type="match status" value="1"/>
</dbReference>
<dbReference type="FunFam" id="3.40.50.300:FF:000174">
    <property type="entry name" value="HPr kinase/phosphorylase"/>
    <property type="match status" value="1"/>
</dbReference>
<dbReference type="Gene3D" id="3.40.1390.20">
    <property type="entry name" value="HprK N-terminal domain-like"/>
    <property type="match status" value="1"/>
</dbReference>
<dbReference type="Gene3D" id="3.40.50.300">
    <property type="entry name" value="P-loop containing nucleotide triphosphate hydrolases"/>
    <property type="match status" value="1"/>
</dbReference>
<dbReference type="HAMAP" id="MF_01249">
    <property type="entry name" value="HPr_kinase"/>
    <property type="match status" value="1"/>
</dbReference>
<dbReference type="InterPro" id="IPR003755">
    <property type="entry name" value="HPr(Ser)_kin/Pase"/>
</dbReference>
<dbReference type="InterPro" id="IPR011104">
    <property type="entry name" value="Hpr_kin/Pase_C"/>
</dbReference>
<dbReference type="InterPro" id="IPR011126">
    <property type="entry name" value="Hpr_kin/Pase_Hpr_N"/>
</dbReference>
<dbReference type="InterPro" id="IPR027417">
    <property type="entry name" value="P-loop_NTPase"/>
</dbReference>
<dbReference type="InterPro" id="IPR028979">
    <property type="entry name" value="Ser_kin/Pase_Hpr-like_N_sf"/>
</dbReference>
<dbReference type="NCBIfam" id="TIGR00679">
    <property type="entry name" value="hpr-ser"/>
    <property type="match status" value="1"/>
</dbReference>
<dbReference type="PANTHER" id="PTHR30305:SF1">
    <property type="entry name" value="HPR KINASE_PHOSPHORYLASE"/>
    <property type="match status" value="1"/>
</dbReference>
<dbReference type="PANTHER" id="PTHR30305">
    <property type="entry name" value="PROTEIN YJDM-RELATED"/>
    <property type="match status" value="1"/>
</dbReference>
<dbReference type="Pfam" id="PF07475">
    <property type="entry name" value="Hpr_kinase_C"/>
    <property type="match status" value="1"/>
</dbReference>
<dbReference type="Pfam" id="PF02603">
    <property type="entry name" value="Hpr_kinase_N"/>
    <property type="match status" value="1"/>
</dbReference>
<dbReference type="SUPFAM" id="SSF75138">
    <property type="entry name" value="HprK N-terminal domain-like"/>
    <property type="match status" value="1"/>
</dbReference>
<dbReference type="SUPFAM" id="SSF53795">
    <property type="entry name" value="PEP carboxykinase-like"/>
    <property type="match status" value="1"/>
</dbReference>
<comment type="function">
    <text evidence="1">Catalyzes the ATP- as well as the pyrophosphate-dependent phosphorylation of a specific serine residue in HPr, a phosphocarrier protein of the phosphoenolpyruvate-dependent sugar phosphotransferase system (PTS). HprK/P also catalyzes the pyrophosphate-producing, inorganic phosphate-dependent dephosphorylation (phosphorolysis) of seryl-phosphorylated HPr (P-Ser-HPr). The two antagonistic activities of HprK/P are regulated by several intracellular metabolites, which change their concentration in response to the absence or presence of rapidly metabolisable carbon sources (glucose, fructose, etc.) in the growth medium. Therefore, by controlling the phosphorylation state of HPr, HPrK/P is a sensor enzyme that plays a major role in the regulation of carbon metabolism and sugar transport: it mediates carbon catabolite repression (CCR), and regulates PTS-catalyzed carbohydrate uptake and inducer exclusion.</text>
</comment>
<comment type="catalytic activity">
    <reaction evidence="1">
        <text>[HPr protein]-L-serine + ATP = [HPr protein]-O-phospho-L-serine + ADP + H(+)</text>
        <dbReference type="Rhea" id="RHEA:46600"/>
        <dbReference type="Rhea" id="RHEA-COMP:11602"/>
        <dbReference type="Rhea" id="RHEA-COMP:11603"/>
        <dbReference type="ChEBI" id="CHEBI:15378"/>
        <dbReference type="ChEBI" id="CHEBI:29999"/>
        <dbReference type="ChEBI" id="CHEBI:30616"/>
        <dbReference type="ChEBI" id="CHEBI:83421"/>
        <dbReference type="ChEBI" id="CHEBI:456216"/>
    </reaction>
</comment>
<comment type="catalytic activity">
    <reaction evidence="1">
        <text>[HPr protein]-O-phospho-L-serine + phosphate + H(+) = [HPr protein]-L-serine + diphosphate</text>
        <dbReference type="Rhea" id="RHEA:46604"/>
        <dbReference type="Rhea" id="RHEA-COMP:11602"/>
        <dbReference type="Rhea" id="RHEA-COMP:11603"/>
        <dbReference type="ChEBI" id="CHEBI:15378"/>
        <dbReference type="ChEBI" id="CHEBI:29999"/>
        <dbReference type="ChEBI" id="CHEBI:33019"/>
        <dbReference type="ChEBI" id="CHEBI:43474"/>
        <dbReference type="ChEBI" id="CHEBI:83421"/>
    </reaction>
</comment>
<comment type="cofactor">
    <cofactor evidence="1">
        <name>Mg(2+)</name>
        <dbReference type="ChEBI" id="CHEBI:18420"/>
    </cofactor>
</comment>
<comment type="subunit">
    <text evidence="1">Homohexamer.</text>
</comment>
<comment type="domain">
    <text evidence="1">The Walker A ATP-binding motif also binds Pi and PPi.</text>
</comment>
<comment type="miscellaneous">
    <text evidence="1">Both phosphorylation and phosphorolysis are carried out by the same active site and suggest a common mechanism for both reactions.</text>
</comment>
<comment type="similarity">
    <text evidence="1">Belongs to the HPrK/P family.</text>
</comment>
<evidence type="ECO:0000255" key="1">
    <source>
        <dbReference type="HAMAP-Rule" id="MF_01249"/>
    </source>
</evidence>
<organism>
    <name type="scientific">Clostridium botulinum (strain Alaska E43 / Type E3)</name>
    <dbReference type="NCBI Taxonomy" id="508767"/>
    <lineage>
        <taxon>Bacteria</taxon>
        <taxon>Bacillati</taxon>
        <taxon>Bacillota</taxon>
        <taxon>Clostridia</taxon>
        <taxon>Eubacteriales</taxon>
        <taxon>Clostridiaceae</taxon>
        <taxon>Clostridium</taxon>
    </lineage>
</organism>
<feature type="chain" id="PRO_1000139897" description="HPr kinase/phosphorylase">
    <location>
        <begin position="1"/>
        <end position="304"/>
    </location>
</feature>
<feature type="region of interest" description="Important for the catalytic mechanism of both phosphorylation and dephosphorylation" evidence="1">
    <location>
        <begin position="198"/>
        <end position="207"/>
    </location>
</feature>
<feature type="region of interest" description="Important for the catalytic mechanism of dephosphorylation" evidence="1">
    <location>
        <begin position="261"/>
        <end position="266"/>
    </location>
</feature>
<feature type="active site" evidence="1">
    <location>
        <position position="136"/>
    </location>
</feature>
<feature type="active site" evidence="1">
    <location>
        <position position="157"/>
    </location>
</feature>
<feature type="active site" description="Proton acceptor; for phosphorylation activity. Proton donor; for dephosphorylation activity" evidence="1">
    <location>
        <position position="175"/>
    </location>
</feature>
<feature type="active site" evidence="1">
    <location>
        <position position="240"/>
    </location>
</feature>
<feature type="binding site" evidence="1">
    <location>
        <begin position="151"/>
        <end position="158"/>
    </location>
    <ligand>
        <name>ATP</name>
        <dbReference type="ChEBI" id="CHEBI:30616"/>
    </ligand>
</feature>
<feature type="binding site" evidence="1">
    <location>
        <position position="158"/>
    </location>
    <ligand>
        <name>Mg(2+)</name>
        <dbReference type="ChEBI" id="CHEBI:18420"/>
    </ligand>
</feature>
<feature type="binding site" evidence="1">
    <location>
        <position position="199"/>
    </location>
    <ligand>
        <name>Mg(2+)</name>
        <dbReference type="ChEBI" id="CHEBI:18420"/>
    </ligand>
</feature>
<accession>B2UWW9</accession>
<reference key="1">
    <citation type="submission" date="2008-05" db="EMBL/GenBank/DDBJ databases">
        <title>Complete genome sequence of Clostridium botulinum E3 str. Alaska E43.</title>
        <authorList>
            <person name="Brinkac L.M."/>
            <person name="Brown J.L."/>
            <person name="Bruce D."/>
            <person name="Detter C."/>
            <person name="Munk C."/>
            <person name="Smith L.A."/>
            <person name="Smith T.J."/>
            <person name="Sutton G."/>
            <person name="Brettin T.S."/>
        </authorList>
    </citation>
    <scope>NUCLEOTIDE SEQUENCE [LARGE SCALE GENOMIC DNA]</scope>
    <source>
        <strain>Alaska E43 / Type E3</strain>
    </source>
</reference>
<proteinExistence type="inferred from homology"/>